<proteinExistence type="inferred from homology"/>
<organism>
    <name type="scientific">Salmonella paratyphi A (strain AKU_12601)</name>
    <dbReference type="NCBI Taxonomy" id="554290"/>
    <lineage>
        <taxon>Bacteria</taxon>
        <taxon>Pseudomonadati</taxon>
        <taxon>Pseudomonadota</taxon>
        <taxon>Gammaproteobacteria</taxon>
        <taxon>Enterobacterales</taxon>
        <taxon>Enterobacteriaceae</taxon>
        <taxon>Salmonella</taxon>
    </lineage>
</organism>
<comment type="function">
    <text evidence="1">Member of a network of 50S ribosomal subunit biogenesis factors which assembles along the 30S-50S interface, preventing incorrect 23S rRNA structures from forming. Promotes peptidyl transferase center (PTC) maturation.</text>
</comment>
<comment type="subcellular location">
    <subcellularLocation>
        <location evidence="1">Cytoplasm</location>
    </subcellularLocation>
    <text evidence="1">Associates with late stage pre-50S ribosomal subunits.</text>
</comment>
<comment type="similarity">
    <text evidence="1">Belongs to the DarP family.</text>
</comment>
<protein>
    <recommendedName>
        <fullName evidence="1">Dual-action ribosomal maturation protein DarP</fullName>
    </recommendedName>
    <alternativeName>
        <fullName evidence="1">Large ribosomal subunit assembly factor DarP</fullName>
    </alternativeName>
</protein>
<gene>
    <name evidence="1" type="primary">darP</name>
    <name type="ordered locus">SSPA3935</name>
</gene>
<evidence type="ECO:0000255" key="1">
    <source>
        <dbReference type="HAMAP-Rule" id="MF_00765"/>
    </source>
</evidence>
<dbReference type="EMBL" id="FM200053">
    <property type="protein sequence ID" value="CAR62223.1"/>
    <property type="molecule type" value="Genomic_DNA"/>
</dbReference>
<dbReference type="SMR" id="B5BKN6"/>
<dbReference type="KEGG" id="sek:SSPA3935"/>
<dbReference type="HOGENOM" id="CLU_106757_2_0_6"/>
<dbReference type="Proteomes" id="UP000001869">
    <property type="component" value="Chromosome"/>
</dbReference>
<dbReference type="GO" id="GO:0005829">
    <property type="term" value="C:cytosol"/>
    <property type="evidence" value="ECO:0007669"/>
    <property type="project" value="TreeGrafter"/>
</dbReference>
<dbReference type="GO" id="GO:0043022">
    <property type="term" value="F:ribosome binding"/>
    <property type="evidence" value="ECO:0007669"/>
    <property type="project" value="UniProtKB-UniRule"/>
</dbReference>
<dbReference type="GO" id="GO:0019843">
    <property type="term" value="F:rRNA binding"/>
    <property type="evidence" value="ECO:0007669"/>
    <property type="project" value="UniProtKB-UniRule"/>
</dbReference>
<dbReference type="GO" id="GO:1902626">
    <property type="term" value="P:assembly of large subunit precursor of preribosome"/>
    <property type="evidence" value="ECO:0007669"/>
    <property type="project" value="UniProtKB-UniRule"/>
</dbReference>
<dbReference type="CDD" id="cd16331">
    <property type="entry name" value="YjgA-like"/>
    <property type="match status" value="1"/>
</dbReference>
<dbReference type="FunFam" id="1.10.60.30:FF:000001">
    <property type="entry name" value="UPF0307 protein YjgA"/>
    <property type="match status" value="1"/>
</dbReference>
<dbReference type="FunFam" id="1.10.60.30:FF:000002">
    <property type="entry name" value="UPF0307 protein YjgA"/>
    <property type="match status" value="1"/>
</dbReference>
<dbReference type="Gene3D" id="1.10.60.30">
    <property type="entry name" value="PSPTO4464-like domains"/>
    <property type="match status" value="2"/>
</dbReference>
<dbReference type="HAMAP" id="MF_00765">
    <property type="entry name" value="DarP"/>
    <property type="match status" value="1"/>
</dbReference>
<dbReference type="InterPro" id="IPR006839">
    <property type="entry name" value="DarP"/>
</dbReference>
<dbReference type="InterPro" id="IPR023153">
    <property type="entry name" value="DarP_sf"/>
</dbReference>
<dbReference type="NCBIfam" id="NF003593">
    <property type="entry name" value="PRK05255.1-1"/>
    <property type="match status" value="1"/>
</dbReference>
<dbReference type="PANTHER" id="PTHR38101">
    <property type="entry name" value="UPF0307 PROTEIN YJGA"/>
    <property type="match status" value="1"/>
</dbReference>
<dbReference type="PANTHER" id="PTHR38101:SF1">
    <property type="entry name" value="UPF0307 PROTEIN YJGA"/>
    <property type="match status" value="1"/>
</dbReference>
<dbReference type="Pfam" id="PF04751">
    <property type="entry name" value="DarP"/>
    <property type="match status" value="1"/>
</dbReference>
<dbReference type="PIRSF" id="PIRSF016183">
    <property type="entry name" value="UCP016183"/>
    <property type="match status" value="1"/>
</dbReference>
<dbReference type="SUPFAM" id="SSF158710">
    <property type="entry name" value="PSPTO4464-like"/>
    <property type="match status" value="1"/>
</dbReference>
<accession>B5BKN6</accession>
<keyword id="KW-0963">Cytoplasm</keyword>
<keyword id="KW-0690">Ribosome biogenesis</keyword>
<keyword id="KW-0694">RNA-binding</keyword>
<keyword id="KW-0699">rRNA-binding</keyword>
<reference key="1">
    <citation type="journal article" date="2009" name="BMC Genomics">
        <title>Pseudogene accumulation in the evolutionary histories of Salmonella enterica serovars Paratyphi A and Typhi.</title>
        <authorList>
            <person name="Holt K.E."/>
            <person name="Thomson N.R."/>
            <person name="Wain J."/>
            <person name="Langridge G.C."/>
            <person name="Hasan R."/>
            <person name="Bhutta Z.A."/>
            <person name="Quail M.A."/>
            <person name="Norbertczak H."/>
            <person name="Walker D."/>
            <person name="Simmonds M."/>
            <person name="White B."/>
            <person name="Bason N."/>
            <person name="Mungall K."/>
            <person name="Dougan G."/>
            <person name="Parkhill J."/>
        </authorList>
    </citation>
    <scope>NUCLEOTIDE SEQUENCE [LARGE SCALE GENOMIC DNA]</scope>
    <source>
        <strain>AKU_12601</strain>
    </source>
</reference>
<feature type="chain" id="PRO_1000198398" description="Dual-action ribosomal maturation protein DarP">
    <location>
        <begin position="1"/>
        <end position="183"/>
    </location>
</feature>
<name>DARP_SALPK</name>
<sequence length="183" mass="21422">MTKQPEDWLDDVPGDDIEDEDDEIIWVSKSEIKRDAEELKRLGAELVDLGKNALDKIPLDTDLRDAIELAQRIKMEGRRRQLQLIGKMLRQRDVEPIRQALDKLKNRHNQQVVLFHKLEHLRDRLIVEGDDAVAEVLTLWPHADRQQLRSLIRNAKKEKEGNKPPKSARQIFQYLRELAENEG</sequence>